<reference key="1">
    <citation type="journal article" date="2003" name="Nature">
        <title>Unique physiological and pathogenic features of Leptospira interrogans revealed by whole-genome sequencing.</title>
        <authorList>
            <person name="Ren S.-X."/>
            <person name="Fu G."/>
            <person name="Jiang X.-G."/>
            <person name="Zeng R."/>
            <person name="Miao Y.-G."/>
            <person name="Xu H."/>
            <person name="Zhang Y.-X."/>
            <person name="Xiong H."/>
            <person name="Lu G."/>
            <person name="Lu L.-F."/>
            <person name="Jiang H.-Q."/>
            <person name="Jia J."/>
            <person name="Tu Y.-F."/>
            <person name="Jiang J.-X."/>
            <person name="Gu W.-Y."/>
            <person name="Zhang Y.-Q."/>
            <person name="Cai Z."/>
            <person name="Sheng H.-H."/>
            <person name="Yin H.-F."/>
            <person name="Zhang Y."/>
            <person name="Zhu G.-F."/>
            <person name="Wan M."/>
            <person name="Huang H.-L."/>
            <person name="Qian Z."/>
            <person name="Wang S.-Y."/>
            <person name="Ma W."/>
            <person name="Yao Z.-J."/>
            <person name="Shen Y."/>
            <person name="Qiang B.-Q."/>
            <person name="Xia Q.-C."/>
            <person name="Guo X.-K."/>
            <person name="Danchin A."/>
            <person name="Saint Girons I."/>
            <person name="Somerville R.L."/>
            <person name="Wen Y.-M."/>
            <person name="Shi M.-H."/>
            <person name="Chen Z."/>
            <person name="Xu J.-G."/>
            <person name="Zhao G.-P."/>
        </authorList>
    </citation>
    <scope>NUCLEOTIDE SEQUENCE [LARGE SCALE GENOMIC DNA]</scope>
    <source>
        <strain>56601</strain>
    </source>
</reference>
<feature type="chain" id="PRO_0000123027" description="dTTP/UTP pyrophosphatase">
    <location>
        <begin position="1"/>
        <end position="187"/>
    </location>
</feature>
<feature type="active site" description="Proton acceptor" evidence="1">
    <location>
        <position position="64"/>
    </location>
</feature>
<feature type="site" description="Important for substrate specificity" evidence="1">
    <location>
        <position position="10"/>
    </location>
</feature>
<feature type="site" description="Important for substrate specificity" evidence="1">
    <location>
        <position position="65"/>
    </location>
</feature>
<feature type="site" description="Important for substrate specificity" evidence="1">
    <location>
        <position position="147"/>
    </location>
</feature>
<organism>
    <name type="scientific">Leptospira interrogans serogroup Icterohaemorrhagiae serovar Lai (strain 56601)</name>
    <dbReference type="NCBI Taxonomy" id="189518"/>
    <lineage>
        <taxon>Bacteria</taxon>
        <taxon>Pseudomonadati</taxon>
        <taxon>Spirochaetota</taxon>
        <taxon>Spirochaetia</taxon>
        <taxon>Leptospirales</taxon>
        <taxon>Leptospiraceae</taxon>
        <taxon>Leptospira</taxon>
    </lineage>
</organism>
<keyword id="KW-0963">Cytoplasm</keyword>
<keyword id="KW-0378">Hydrolase</keyword>
<keyword id="KW-0546">Nucleotide metabolism</keyword>
<keyword id="KW-1185">Reference proteome</keyword>
<protein>
    <recommendedName>
        <fullName evidence="1">dTTP/UTP pyrophosphatase</fullName>
        <shortName evidence="1">dTTPase/UTPase</shortName>
        <ecNumber evidence="1">3.6.1.9</ecNumber>
    </recommendedName>
    <alternativeName>
        <fullName evidence="1">Nucleoside triphosphate pyrophosphatase</fullName>
    </alternativeName>
    <alternativeName>
        <fullName evidence="1">Nucleotide pyrophosphatase</fullName>
        <shortName evidence="1">Nucleotide PPase</shortName>
    </alternativeName>
</protein>
<evidence type="ECO:0000255" key="1">
    <source>
        <dbReference type="HAMAP-Rule" id="MF_00528"/>
    </source>
</evidence>
<gene>
    <name type="ordered locus">LA_0017</name>
</gene>
<sequence length="187" mass="21940">MIVLRSKSPRRKQILESLDLDFRIESEDIDESSLKDEHPLEYLKRISLSKLGTRSKDELLISCDTIVVQENSILQKPENFSQAIEMLERLSGKTHIVYSGLGIYYNRLEQFAFDSSKVHFHTWNKEQIKKYIERYSPFDKAGSYGVQDIEGPVQSFEGSYTNILGFPIRMFFQYHELWKKYLKGNQA</sequence>
<proteinExistence type="inferred from homology"/>
<accession>Q8FA20</accession>
<dbReference type="EC" id="3.6.1.9" evidence="1"/>
<dbReference type="EMBL" id="AE010300">
    <property type="protein sequence ID" value="AAN47216.1"/>
    <property type="molecule type" value="Genomic_DNA"/>
</dbReference>
<dbReference type="RefSeq" id="NP_710198.1">
    <property type="nucleotide sequence ID" value="NC_004342.2"/>
</dbReference>
<dbReference type="RefSeq" id="WP_000636518.1">
    <property type="nucleotide sequence ID" value="NC_004342.2"/>
</dbReference>
<dbReference type="SMR" id="Q8FA20"/>
<dbReference type="FunCoup" id="Q8FA20">
    <property type="interactions" value="289"/>
</dbReference>
<dbReference type="STRING" id="189518.LA_0017"/>
<dbReference type="PaxDb" id="189518-LA_0017"/>
<dbReference type="EnsemblBacteria" id="AAN47216">
    <property type="protein sequence ID" value="AAN47216"/>
    <property type="gene ID" value="LA_0017"/>
</dbReference>
<dbReference type="KEGG" id="lil:LA_0017"/>
<dbReference type="PATRIC" id="fig|189518.3.peg.20"/>
<dbReference type="HOGENOM" id="CLU_040416_0_0_12"/>
<dbReference type="InParanoid" id="Q8FA20"/>
<dbReference type="OrthoDB" id="9807767at2"/>
<dbReference type="Proteomes" id="UP000001408">
    <property type="component" value="Chromosome I"/>
</dbReference>
<dbReference type="GO" id="GO:0005737">
    <property type="term" value="C:cytoplasm"/>
    <property type="evidence" value="ECO:0007669"/>
    <property type="project" value="UniProtKB-SubCell"/>
</dbReference>
<dbReference type="GO" id="GO:0036218">
    <property type="term" value="F:dTTP diphosphatase activity"/>
    <property type="evidence" value="ECO:0007669"/>
    <property type="project" value="RHEA"/>
</dbReference>
<dbReference type="GO" id="GO:0047429">
    <property type="term" value="F:nucleoside triphosphate diphosphatase activity"/>
    <property type="evidence" value="ECO:0000318"/>
    <property type="project" value="GO_Central"/>
</dbReference>
<dbReference type="GO" id="GO:0036221">
    <property type="term" value="F:UTP diphosphatase activity"/>
    <property type="evidence" value="ECO:0007669"/>
    <property type="project" value="RHEA"/>
</dbReference>
<dbReference type="GO" id="GO:0009117">
    <property type="term" value="P:nucleotide metabolic process"/>
    <property type="evidence" value="ECO:0007669"/>
    <property type="project" value="UniProtKB-KW"/>
</dbReference>
<dbReference type="CDD" id="cd00555">
    <property type="entry name" value="Maf"/>
    <property type="match status" value="1"/>
</dbReference>
<dbReference type="Gene3D" id="3.90.950.10">
    <property type="match status" value="1"/>
</dbReference>
<dbReference type="HAMAP" id="MF_00528">
    <property type="entry name" value="Maf"/>
    <property type="match status" value="1"/>
</dbReference>
<dbReference type="InterPro" id="IPR029001">
    <property type="entry name" value="ITPase-like_fam"/>
</dbReference>
<dbReference type="InterPro" id="IPR003697">
    <property type="entry name" value="Maf-like"/>
</dbReference>
<dbReference type="NCBIfam" id="TIGR00172">
    <property type="entry name" value="maf"/>
    <property type="match status" value="1"/>
</dbReference>
<dbReference type="PANTHER" id="PTHR43213">
    <property type="entry name" value="BIFUNCTIONAL DTTP/UTP PYROPHOSPHATASE/METHYLTRANSFERASE PROTEIN-RELATED"/>
    <property type="match status" value="1"/>
</dbReference>
<dbReference type="PANTHER" id="PTHR43213:SF5">
    <property type="entry name" value="BIFUNCTIONAL DTTP_UTP PYROPHOSPHATASE_METHYLTRANSFERASE PROTEIN-RELATED"/>
    <property type="match status" value="1"/>
</dbReference>
<dbReference type="Pfam" id="PF02545">
    <property type="entry name" value="Maf"/>
    <property type="match status" value="1"/>
</dbReference>
<dbReference type="PIRSF" id="PIRSF006305">
    <property type="entry name" value="Maf"/>
    <property type="match status" value="1"/>
</dbReference>
<dbReference type="SUPFAM" id="SSF52972">
    <property type="entry name" value="ITPase-like"/>
    <property type="match status" value="1"/>
</dbReference>
<name>NTPPA_LEPIN</name>
<comment type="function">
    <text evidence="1">Nucleoside triphosphate pyrophosphatase that hydrolyzes dTTP and UTP. May have a dual role in cell division arrest and in preventing the incorporation of modified nucleotides into cellular nucleic acids.</text>
</comment>
<comment type="catalytic activity">
    <reaction evidence="1">
        <text>dTTP + H2O = dTMP + diphosphate + H(+)</text>
        <dbReference type="Rhea" id="RHEA:28534"/>
        <dbReference type="ChEBI" id="CHEBI:15377"/>
        <dbReference type="ChEBI" id="CHEBI:15378"/>
        <dbReference type="ChEBI" id="CHEBI:33019"/>
        <dbReference type="ChEBI" id="CHEBI:37568"/>
        <dbReference type="ChEBI" id="CHEBI:63528"/>
        <dbReference type="EC" id="3.6.1.9"/>
    </reaction>
</comment>
<comment type="catalytic activity">
    <reaction evidence="1">
        <text>UTP + H2O = UMP + diphosphate + H(+)</text>
        <dbReference type="Rhea" id="RHEA:29395"/>
        <dbReference type="ChEBI" id="CHEBI:15377"/>
        <dbReference type="ChEBI" id="CHEBI:15378"/>
        <dbReference type="ChEBI" id="CHEBI:33019"/>
        <dbReference type="ChEBI" id="CHEBI:46398"/>
        <dbReference type="ChEBI" id="CHEBI:57865"/>
        <dbReference type="EC" id="3.6.1.9"/>
    </reaction>
</comment>
<comment type="cofactor">
    <cofactor evidence="1">
        <name>a divalent metal cation</name>
        <dbReference type="ChEBI" id="CHEBI:60240"/>
    </cofactor>
</comment>
<comment type="subcellular location">
    <subcellularLocation>
        <location evidence="1">Cytoplasm</location>
    </subcellularLocation>
</comment>
<comment type="similarity">
    <text evidence="1">Belongs to the Maf family. YhdE subfamily.</text>
</comment>